<dbReference type="EMBL" id="Z71450">
    <property type="protein sequence ID" value="CAA96065.1"/>
    <property type="molecule type" value="mRNA"/>
</dbReference>
<dbReference type="EMBL" id="AC005965">
    <property type="status" value="NOT_ANNOTATED_CDS"/>
    <property type="molecule type" value="Genomic_DNA"/>
</dbReference>
<dbReference type="EMBL" id="AF077407">
    <property type="protein sequence ID" value="AAC26247.2"/>
    <property type="status" value="ALT_SEQ"/>
    <property type="molecule type" value="Genomic_DNA"/>
</dbReference>
<dbReference type="EMBL" id="CP002688">
    <property type="protein sequence ID" value="AED93540.1"/>
    <property type="molecule type" value="Genomic_DNA"/>
</dbReference>
<dbReference type="PIR" id="T01843">
    <property type="entry name" value="T01843"/>
</dbReference>
<dbReference type="RefSeq" id="NP_001330038.1">
    <property type="nucleotide sequence ID" value="NM_001343969.1"/>
</dbReference>
<dbReference type="RefSeq" id="NP_197996.1">
    <property type="nucleotide sequence ID" value="NM_122525.3"/>
</dbReference>
<dbReference type="SMR" id="P92943"/>
<dbReference type="BioGRID" id="17968">
    <property type="interactions" value="1"/>
</dbReference>
<dbReference type="FunCoup" id="P92943">
    <property type="interactions" value="3226"/>
</dbReference>
<dbReference type="STRING" id="3702.P92943"/>
<dbReference type="iPTMnet" id="P92943"/>
<dbReference type="PaxDb" id="3702-AT5G26240.1"/>
<dbReference type="ProteomicsDB" id="246712"/>
<dbReference type="EnsemblPlants" id="AT5G26240.1">
    <property type="protein sequence ID" value="AT5G26240.1"/>
    <property type="gene ID" value="AT5G26240"/>
</dbReference>
<dbReference type="GeneID" id="832693"/>
<dbReference type="Gramene" id="AT5G26240.1">
    <property type="protein sequence ID" value="AT5G26240.1"/>
    <property type="gene ID" value="AT5G26240"/>
</dbReference>
<dbReference type="KEGG" id="ath:AT5G26240"/>
<dbReference type="Araport" id="AT5G26240"/>
<dbReference type="TAIR" id="AT5G26240">
    <property type="gene designation" value="CLC-D"/>
</dbReference>
<dbReference type="eggNOG" id="KOG0474">
    <property type="taxonomic scope" value="Eukaryota"/>
</dbReference>
<dbReference type="HOGENOM" id="CLU_003181_4_0_1"/>
<dbReference type="InParanoid" id="P92943"/>
<dbReference type="PhylomeDB" id="P92943"/>
<dbReference type="PRO" id="PR:P92943"/>
<dbReference type="Proteomes" id="UP000006548">
    <property type="component" value="Chromosome 5"/>
</dbReference>
<dbReference type="ExpressionAtlas" id="P92943">
    <property type="expression patterns" value="baseline and differential"/>
</dbReference>
<dbReference type="GO" id="GO:0034707">
    <property type="term" value="C:chloride channel complex"/>
    <property type="evidence" value="ECO:0007669"/>
    <property type="project" value="UniProtKB-KW"/>
</dbReference>
<dbReference type="GO" id="GO:0005802">
    <property type="term" value="C:trans-Golgi network"/>
    <property type="evidence" value="ECO:0000314"/>
    <property type="project" value="TAIR"/>
</dbReference>
<dbReference type="GO" id="GO:0005247">
    <property type="term" value="F:voltage-gated chloride channel activity"/>
    <property type="evidence" value="ECO:0007669"/>
    <property type="project" value="InterPro"/>
</dbReference>
<dbReference type="GO" id="GO:0045824">
    <property type="term" value="P:negative regulation of innate immune response"/>
    <property type="evidence" value="ECO:0000315"/>
    <property type="project" value="TAIR"/>
</dbReference>
<dbReference type="GO" id="GO:0009826">
    <property type="term" value="P:unidimensional cell growth"/>
    <property type="evidence" value="ECO:0000315"/>
    <property type="project" value="TAIR"/>
</dbReference>
<dbReference type="CDD" id="cd04591">
    <property type="entry name" value="CBS_pair_voltage-gated_CLC_euk_bac"/>
    <property type="match status" value="1"/>
</dbReference>
<dbReference type="CDD" id="cd03685">
    <property type="entry name" value="ClC_6_like"/>
    <property type="match status" value="1"/>
</dbReference>
<dbReference type="FunFam" id="1.10.3080.10:FF:000004">
    <property type="entry name" value="Chloride channel ClC3"/>
    <property type="match status" value="1"/>
</dbReference>
<dbReference type="FunFam" id="3.10.580.10:FF:000087">
    <property type="entry name" value="Chloride channel protein"/>
    <property type="match status" value="1"/>
</dbReference>
<dbReference type="Gene3D" id="3.10.580.10">
    <property type="entry name" value="CBS-domain"/>
    <property type="match status" value="1"/>
</dbReference>
<dbReference type="Gene3D" id="1.10.3080.10">
    <property type="entry name" value="Clc chloride channel"/>
    <property type="match status" value="1"/>
</dbReference>
<dbReference type="InterPro" id="IPR000644">
    <property type="entry name" value="CBS_dom"/>
</dbReference>
<dbReference type="InterPro" id="IPR046342">
    <property type="entry name" value="CBS_dom_sf"/>
</dbReference>
<dbReference type="InterPro" id="IPR051280">
    <property type="entry name" value="Cl-channel/antiporter"/>
</dbReference>
<dbReference type="InterPro" id="IPR014743">
    <property type="entry name" value="Cl-channel_core"/>
</dbReference>
<dbReference type="InterPro" id="IPR002251">
    <property type="entry name" value="Cl_channel_pln"/>
</dbReference>
<dbReference type="InterPro" id="IPR001807">
    <property type="entry name" value="ClC"/>
</dbReference>
<dbReference type="PANTHER" id="PTHR11689">
    <property type="entry name" value="CHLORIDE CHANNEL PROTEIN CLC FAMILY MEMBER"/>
    <property type="match status" value="1"/>
</dbReference>
<dbReference type="PANTHER" id="PTHR11689:SF136">
    <property type="entry name" value="H(+)_CL(-) EXCHANGE TRANSPORTER 7"/>
    <property type="match status" value="1"/>
</dbReference>
<dbReference type="Pfam" id="PF00571">
    <property type="entry name" value="CBS"/>
    <property type="match status" value="1"/>
</dbReference>
<dbReference type="Pfam" id="PF00654">
    <property type="entry name" value="Voltage_CLC"/>
    <property type="match status" value="1"/>
</dbReference>
<dbReference type="PRINTS" id="PR00762">
    <property type="entry name" value="CLCHANNEL"/>
</dbReference>
<dbReference type="PRINTS" id="PR01120">
    <property type="entry name" value="CLCHANNELPLT"/>
</dbReference>
<dbReference type="SMART" id="SM00116">
    <property type="entry name" value="CBS"/>
    <property type="match status" value="2"/>
</dbReference>
<dbReference type="SUPFAM" id="SSF54631">
    <property type="entry name" value="CBS-domain pair"/>
    <property type="match status" value="1"/>
</dbReference>
<dbReference type="SUPFAM" id="SSF81340">
    <property type="entry name" value="Clc chloride channel"/>
    <property type="match status" value="1"/>
</dbReference>
<dbReference type="PROSITE" id="PS51371">
    <property type="entry name" value="CBS"/>
    <property type="match status" value="2"/>
</dbReference>
<protein>
    <recommendedName>
        <fullName>Chloride channel protein CLC-d</fullName>
        <shortName>AtCLC-d</shortName>
    </recommendedName>
    <alternativeName>
        <fullName>CBS domain-containing protein CBSCLC2</fullName>
    </alternativeName>
</protein>
<keyword id="KW-0129">CBS domain</keyword>
<keyword id="KW-0868">Chloride</keyword>
<keyword id="KW-0869">Chloride channel</keyword>
<keyword id="KW-0407">Ion channel</keyword>
<keyword id="KW-0406">Ion transport</keyword>
<keyword id="KW-0472">Membrane</keyword>
<keyword id="KW-1185">Reference proteome</keyword>
<keyword id="KW-0677">Repeat</keyword>
<keyword id="KW-0812">Transmembrane</keyword>
<keyword id="KW-1133">Transmembrane helix</keyword>
<keyword id="KW-0813">Transport</keyword>
<keyword id="KW-0851">Voltage-gated channel</keyword>
<evidence type="ECO:0000250" key="1"/>
<evidence type="ECO:0000255" key="2"/>
<evidence type="ECO:0000255" key="3">
    <source>
        <dbReference type="PROSITE-ProRule" id="PRU00703"/>
    </source>
</evidence>
<evidence type="ECO:0000269" key="4">
    <source>
    </source>
</evidence>
<evidence type="ECO:0000305" key="5"/>
<name>CLCD_ARATH</name>
<comment type="function">
    <text>Voltage-gated chloride channel.</text>
</comment>
<comment type="subunit">
    <text evidence="1">Homodimer.</text>
</comment>
<comment type="subcellular location">
    <subcellularLocation>
        <location>Membrane</location>
        <topology>Multi-pass membrane protein</topology>
    </subcellularLocation>
</comment>
<comment type="tissue specificity">
    <text>Broadly expressed in the plant, but predominantly in the silique.</text>
</comment>
<comment type="similarity">
    <text evidence="5">Belongs to the chloride channel (TC 2.A.49) family.</text>
</comment>
<comment type="sequence caution" evidence="5">
    <conflict type="erroneous gene model prediction">
        <sequence resource="EMBL-CDS" id="AAC26247"/>
    </conflict>
</comment>
<sequence length="792" mass="87062">MLSNHLQNGIESDNLLWSRVPESDDTSTDDITLLNSHRDGDGGVNSLDYEVIENYAYREEQAHRGKLYVGYYVAVKWFFSLLIGIGTGLAAVFINLSVENFAGWKFALTFAIIQKSYFAGFIVYLLINLVLVFSSAYIITQFAPAAAGSGIPEIKGYLNGIDIPGTLLFRTLIGKIFGSIGSVGGGLALGKEGPLVHTGACIASLLGQGGSTKYHLNSRWPQLFKSDRDRRDLVTCGCAAGVAAAFRAPVGGVLFALEEVTSWWRSQLMWRVFFTSAIVAVVVRTAMGWCKSGICGHFGGGGFIIWDVSDGQDDYYFKELLPMAVIGVIGGLLGALFNQLTLYMTSWRRNSLHKKGNRVKIIEACIISCITSAISFGLPLLRKCSPCPESVPDSGIECPRPPGMYGNYVNFFCKTDNEYNDLATIFFNTQDDAIRNLFSAKTMREFSAQSLLTFLAMFYTLAVVTFGTAVPAGQFVPGIMIGSTYGRLVGMFVVRFYKKLNIEEGTYALLGAASFLGGSMRMTVSLCVIMVEITNNLKLLPLIMLVLLISKAVGDAFNEGLYEVQARLKGIPLLESRPKYHMRQMIAKEACQSQKVISLPRVIRVADVASILGSNKHNGFPVIDHTRSGETLVIGLVLRSHLLVLLQSKVDFQHSPLPCDPSARNIRHSFSEFAKPVSSKGLCIEDIHLTSDDLEMYIDLAPFLNPSPYVVPEDMSLTKVYNLFRQLGLRHLFVVPRPSRVIGLITRKDLLIEENGESSAVELQQSTSVRGRYSETATRMDAARPLLDDLLG</sequence>
<feature type="chain" id="PRO_0000094468" description="Chloride channel protein CLC-d">
    <location>
        <begin position="1"/>
        <end position="792"/>
    </location>
</feature>
<feature type="transmembrane region" description="Helical; Name=1" evidence="2">
    <location>
        <begin position="78"/>
        <end position="98"/>
    </location>
</feature>
<feature type="transmembrane region" description="Helical; Name=2" evidence="2">
    <location>
        <begin position="119"/>
        <end position="139"/>
    </location>
</feature>
<feature type="transmembrane region" description="Helical; Name=3" evidence="2">
    <location>
        <begin position="170"/>
        <end position="190"/>
    </location>
</feature>
<feature type="transmembrane region" description="Helical; Name=4" evidence="2">
    <location>
        <begin position="195"/>
        <end position="215"/>
    </location>
</feature>
<feature type="transmembrane region" description="Helical; Name=5" evidence="2">
    <location>
        <begin position="237"/>
        <end position="257"/>
    </location>
</feature>
<feature type="transmembrane region" description="Helical; Name=6" evidence="2">
    <location>
        <begin position="267"/>
        <end position="287"/>
    </location>
</feature>
<feature type="transmembrane region" description="Helical; Name=7" evidence="2">
    <location>
        <begin position="320"/>
        <end position="340"/>
    </location>
</feature>
<feature type="transmembrane region" description="Helical; Name=8" evidence="2">
    <location>
        <begin position="361"/>
        <end position="381"/>
    </location>
</feature>
<feature type="transmembrane region" description="Helical; Name=9" evidence="2">
    <location>
        <begin position="451"/>
        <end position="471"/>
    </location>
</feature>
<feature type="transmembrane region" description="Helical; Name=10" evidence="2">
    <location>
        <begin position="474"/>
        <end position="494"/>
    </location>
</feature>
<feature type="transmembrane region" description="Helical; Name=11" evidence="2">
    <location>
        <begin position="508"/>
        <end position="528"/>
    </location>
</feature>
<feature type="transmembrane region" description="Helical; Name=12" evidence="2">
    <location>
        <begin position="529"/>
        <end position="549"/>
    </location>
</feature>
<feature type="transmembrane region" description="Helical; Name=13" evidence="2">
    <location>
        <begin position="731"/>
        <end position="751"/>
    </location>
</feature>
<feature type="domain" description="CBS 1" evidence="3">
    <location>
        <begin position="592"/>
        <end position="652"/>
    </location>
</feature>
<feature type="domain" description="CBS 2" evidence="3">
    <location>
        <begin position="704"/>
        <end position="761"/>
    </location>
</feature>
<feature type="mutagenesis site" description="Abolishes the activity." evidence="4">
    <original>I</original>
    <variation>R</variation>
    <location>
        <position position="180"/>
    </location>
</feature>
<feature type="mutagenesis site" description="Abolishes the activity." evidence="4">
    <original>L</original>
    <variation>R</variation>
    <location>
        <position position="187"/>
    </location>
</feature>
<feature type="mutagenesis site" description="Abolishes the activity." evidence="4">
    <original>P</original>
    <variation>L</variation>
    <location>
        <position position="471"/>
    </location>
</feature>
<feature type="sequence conflict" description="In Ref. 1; CAA96065." evidence="5" ref="1">
    <original>E</original>
    <variation>D</variation>
    <location>
        <position position="775"/>
    </location>
</feature>
<gene>
    <name type="primary">CLC-D</name>
    <name type="synonym">CBSCLC2</name>
    <name type="ordered locus">At5g26240</name>
    <name type="ORF">F9D12.10</name>
    <name type="ORF">T19G15.90</name>
</gene>
<reference key="1">
    <citation type="journal article" date="1996" name="J. Biol. Chem.">
        <title>A family of putative chloride channels from Arabidopsis and functional complementation of a yeast strain with a CLC gene disruption.</title>
        <authorList>
            <person name="Hechenberger M."/>
            <person name="Schwappach B."/>
            <person name="Fischer W.N."/>
            <person name="Frommer W.B."/>
            <person name="Jentsch T.J."/>
            <person name="Steinmeyer K."/>
        </authorList>
    </citation>
    <scope>NUCLEOTIDE SEQUENCE [MRNA]</scope>
    <scope>CHARACTERIZATION</scope>
    <scope>MUTAGENESIS</scope>
    <source>
        <strain>cv. Columbia</strain>
    </source>
</reference>
<reference key="2">
    <citation type="journal article" date="2000" name="Nature">
        <title>Sequence and analysis of chromosome 5 of the plant Arabidopsis thaliana.</title>
        <authorList>
            <person name="Tabata S."/>
            <person name="Kaneko T."/>
            <person name="Nakamura Y."/>
            <person name="Kotani H."/>
            <person name="Kato T."/>
            <person name="Asamizu E."/>
            <person name="Miyajima N."/>
            <person name="Sasamoto S."/>
            <person name="Kimura T."/>
            <person name="Hosouchi T."/>
            <person name="Kawashima K."/>
            <person name="Kohara M."/>
            <person name="Matsumoto M."/>
            <person name="Matsuno A."/>
            <person name="Muraki A."/>
            <person name="Nakayama S."/>
            <person name="Nakazaki N."/>
            <person name="Naruo K."/>
            <person name="Okumura S."/>
            <person name="Shinpo S."/>
            <person name="Takeuchi C."/>
            <person name="Wada T."/>
            <person name="Watanabe A."/>
            <person name="Yamada M."/>
            <person name="Yasuda M."/>
            <person name="Sato S."/>
            <person name="de la Bastide M."/>
            <person name="Huang E."/>
            <person name="Spiegel L."/>
            <person name="Gnoj L."/>
            <person name="O'Shaughnessy A."/>
            <person name="Preston R."/>
            <person name="Habermann K."/>
            <person name="Murray J."/>
            <person name="Johnson D."/>
            <person name="Rohlfing T."/>
            <person name="Nelson J."/>
            <person name="Stoneking T."/>
            <person name="Pepin K."/>
            <person name="Spieth J."/>
            <person name="Sekhon M."/>
            <person name="Armstrong J."/>
            <person name="Becker M."/>
            <person name="Belter E."/>
            <person name="Cordum H."/>
            <person name="Cordes M."/>
            <person name="Courtney L."/>
            <person name="Courtney W."/>
            <person name="Dante M."/>
            <person name="Du H."/>
            <person name="Edwards J."/>
            <person name="Fryman J."/>
            <person name="Haakensen B."/>
            <person name="Lamar E."/>
            <person name="Latreille P."/>
            <person name="Leonard S."/>
            <person name="Meyer R."/>
            <person name="Mulvaney E."/>
            <person name="Ozersky P."/>
            <person name="Riley A."/>
            <person name="Strowmatt C."/>
            <person name="Wagner-McPherson C."/>
            <person name="Wollam A."/>
            <person name="Yoakum M."/>
            <person name="Bell M."/>
            <person name="Dedhia N."/>
            <person name="Parnell L."/>
            <person name="Shah R."/>
            <person name="Rodriguez M."/>
            <person name="Hoon See L."/>
            <person name="Vil D."/>
            <person name="Baker J."/>
            <person name="Kirchoff K."/>
            <person name="Toth K."/>
            <person name="King L."/>
            <person name="Bahret A."/>
            <person name="Miller B."/>
            <person name="Marra M.A."/>
            <person name="Martienssen R."/>
            <person name="McCombie W.R."/>
            <person name="Wilson R.K."/>
            <person name="Murphy G."/>
            <person name="Bancroft I."/>
            <person name="Volckaert G."/>
            <person name="Wambutt R."/>
            <person name="Duesterhoeft A."/>
            <person name="Stiekema W."/>
            <person name="Pohl T."/>
            <person name="Entian K.-D."/>
            <person name="Terryn N."/>
            <person name="Hartley N."/>
            <person name="Bent E."/>
            <person name="Johnson S."/>
            <person name="Langham S.-A."/>
            <person name="McCullagh B."/>
            <person name="Robben J."/>
            <person name="Grymonprez B."/>
            <person name="Zimmermann W."/>
            <person name="Ramsperger U."/>
            <person name="Wedler H."/>
            <person name="Balke K."/>
            <person name="Wedler E."/>
            <person name="Peters S."/>
            <person name="van Staveren M."/>
            <person name="Dirkse W."/>
            <person name="Mooijman P."/>
            <person name="Klein Lankhorst R."/>
            <person name="Weitzenegger T."/>
            <person name="Bothe G."/>
            <person name="Rose M."/>
            <person name="Hauf J."/>
            <person name="Berneiser S."/>
            <person name="Hempel S."/>
            <person name="Feldpausch M."/>
            <person name="Lamberth S."/>
            <person name="Villarroel R."/>
            <person name="Gielen J."/>
            <person name="Ardiles W."/>
            <person name="Bents O."/>
            <person name="Lemcke K."/>
            <person name="Kolesov G."/>
            <person name="Mayer K.F.X."/>
            <person name="Rudd S."/>
            <person name="Schoof H."/>
            <person name="Schueller C."/>
            <person name="Zaccaria P."/>
            <person name="Mewes H.-W."/>
            <person name="Bevan M."/>
            <person name="Fransz P.F."/>
        </authorList>
    </citation>
    <scope>NUCLEOTIDE SEQUENCE [LARGE SCALE GENOMIC DNA]</scope>
    <source>
        <strain>cv. Columbia</strain>
    </source>
</reference>
<reference key="3">
    <citation type="journal article" date="2017" name="Plant J.">
        <title>Araport11: a complete reannotation of the Arabidopsis thaliana reference genome.</title>
        <authorList>
            <person name="Cheng C.Y."/>
            <person name="Krishnakumar V."/>
            <person name="Chan A.P."/>
            <person name="Thibaud-Nissen F."/>
            <person name="Schobel S."/>
            <person name="Town C.D."/>
        </authorList>
    </citation>
    <scope>GENOME REANNOTATION</scope>
    <source>
        <strain>cv. Columbia</strain>
    </source>
</reference>
<reference key="4">
    <citation type="journal article" date="2009" name="BMC Genomics">
        <title>Genome wide expression analysis of CBS domain containing proteins in Arabidopsis thaliana (L.) Heynh and Oryza sativa L. reveals their developmental and stress regulation.</title>
        <authorList>
            <person name="Kushwaha H.R."/>
            <person name="Singh A.K."/>
            <person name="Sopory S.K."/>
            <person name="Singla-Pareek S.L."/>
            <person name="Pareek A."/>
        </authorList>
    </citation>
    <scope>GENE FAMILY</scope>
    <scope>NOMENCLATURE</scope>
</reference>
<organism>
    <name type="scientific">Arabidopsis thaliana</name>
    <name type="common">Mouse-ear cress</name>
    <dbReference type="NCBI Taxonomy" id="3702"/>
    <lineage>
        <taxon>Eukaryota</taxon>
        <taxon>Viridiplantae</taxon>
        <taxon>Streptophyta</taxon>
        <taxon>Embryophyta</taxon>
        <taxon>Tracheophyta</taxon>
        <taxon>Spermatophyta</taxon>
        <taxon>Magnoliopsida</taxon>
        <taxon>eudicotyledons</taxon>
        <taxon>Gunneridae</taxon>
        <taxon>Pentapetalae</taxon>
        <taxon>rosids</taxon>
        <taxon>malvids</taxon>
        <taxon>Brassicales</taxon>
        <taxon>Brassicaceae</taxon>
        <taxon>Camelineae</taxon>
        <taxon>Arabidopsis</taxon>
    </lineage>
</organism>
<accession>P92943</accession>
<accession>O81491</accession>
<proteinExistence type="evidence at protein level"/>